<keyword id="KW-0456">Lyase</keyword>
<keyword id="KW-0460">Magnesium</keyword>
<keyword id="KW-0479">Metal-binding</keyword>
<keyword id="KW-1185">Reference proteome</keyword>
<feature type="chain" id="PRO_0000451266" description="Sesquiterpene synthase M422DRAFT_47084">
    <location>
        <begin position="1"/>
        <end position="347"/>
    </location>
</feature>
<feature type="short sequence motif" description="DDXXD motif" evidence="1">
    <location>
        <begin position="93"/>
        <end position="97"/>
    </location>
</feature>
<feature type="binding site" evidence="2">
    <location>
        <position position="93"/>
    </location>
    <ligand>
        <name>Mg(2+)</name>
        <dbReference type="ChEBI" id="CHEBI:18420"/>
        <label>1</label>
    </ligand>
</feature>
<feature type="binding site" evidence="2">
    <location>
        <position position="93"/>
    </location>
    <ligand>
        <name>Mg(2+)</name>
        <dbReference type="ChEBI" id="CHEBI:18420"/>
        <label>2</label>
    </ligand>
</feature>
<feature type="binding site" evidence="2">
    <location>
        <position position="228"/>
    </location>
    <ligand>
        <name>Mg(2+)</name>
        <dbReference type="ChEBI" id="CHEBI:18420"/>
        <label>3</label>
    </ligand>
</feature>
<feature type="binding site" evidence="2">
    <location>
        <position position="232"/>
    </location>
    <ligand>
        <name>Mg(2+)</name>
        <dbReference type="ChEBI" id="CHEBI:18420"/>
        <label>3</label>
    </ligand>
</feature>
<feature type="binding site" evidence="2">
    <location>
        <position position="236"/>
    </location>
    <ligand>
        <name>Mg(2+)</name>
        <dbReference type="ChEBI" id="CHEBI:18420"/>
        <label>3</label>
    </ligand>
</feature>
<feature type="binding site" evidence="2">
    <location>
        <position position="318"/>
    </location>
    <ligand>
        <name>(2E,6E)-farnesyl diphosphate</name>
        <dbReference type="ChEBI" id="CHEBI:175763"/>
    </ligand>
</feature>
<feature type="binding site" evidence="2">
    <location>
        <position position="319"/>
    </location>
    <ligand>
        <name>(2E,6E)-farnesyl diphosphate</name>
        <dbReference type="ChEBI" id="CHEBI:175763"/>
    </ligand>
</feature>
<dbReference type="EC" id="4.2.3.-" evidence="3"/>
<dbReference type="EC" id="4.2.3.88" evidence="3"/>
<dbReference type="EMBL" id="KN837114">
    <property type="protein sequence ID" value="KIJ44869.1"/>
    <property type="molecule type" value="Genomic_DNA"/>
</dbReference>
<dbReference type="SMR" id="A0A0C9VD04"/>
<dbReference type="HOGENOM" id="CLU_042538_2_1_1"/>
<dbReference type="OrthoDB" id="2861623at2759"/>
<dbReference type="Proteomes" id="UP000054279">
    <property type="component" value="Unassembled WGS sequence"/>
</dbReference>
<dbReference type="GO" id="GO:0046872">
    <property type="term" value="F:metal ion binding"/>
    <property type="evidence" value="ECO:0007669"/>
    <property type="project" value="UniProtKB-KW"/>
</dbReference>
<dbReference type="GO" id="GO:0010333">
    <property type="term" value="F:terpene synthase activity"/>
    <property type="evidence" value="ECO:0007669"/>
    <property type="project" value="InterPro"/>
</dbReference>
<dbReference type="GO" id="GO:0008299">
    <property type="term" value="P:isoprenoid biosynthetic process"/>
    <property type="evidence" value="ECO:0007669"/>
    <property type="project" value="UniProtKB-ARBA"/>
</dbReference>
<dbReference type="Gene3D" id="1.10.600.10">
    <property type="entry name" value="Farnesyl Diphosphate Synthase"/>
    <property type="match status" value="1"/>
</dbReference>
<dbReference type="InterPro" id="IPR008949">
    <property type="entry name" value="Isoprenoid_synthase_dom_sf"/>
</dbReference>
<dbReference type="InterPro" id="IPR034686">
    <property type="entry name" value="Terpene_cyclase-like_2"/>
</dbReference>
<dbReference type="PANTHER" id="PTHR35201:SF4">
    <property type="entry name" value="BETA-PINACENE SYNTHASE-RELATED"/>
    <property type="match status" value="1"/>
</dbReference>
<dbReference type="PANTHER" id="PTHR35201">
    <property type="entry name" value="TERPENE SYNTHASE"/>
    <property type="match status" value="1"/>
</dbReference>
<dbReference type="Pfam" id="PF19086">
    <property type="entry name" value="Terpene_syn_C_2"/>
    <property type="match status" value="1"/>
</dbReference>
<dbReference type="SFLD" id="SFLDS00005">
    <property type="entry name" value="Isoprenoid_Synthase_Type_I"/>
    <property type="match status" value="1"/>
</dbReference>
<dbReference type="SFLD" id="SFLDG01020">
    <property type="entry name" value="Terpene_Cyclase_Like_2"/>
    <property type="match status" value="1"/>
</dbReference>
<dbReference type="SUPFAM" id="SSF48576">
    <property type="entry name" value="Terpenoid synthases"/>
    <property type="match status" value="1"/>
</dbReference>
<gene>
    <name type="ORF">M422DRAFT_47084</name>
</gene>
<proteinExistence type="evidence at protein level"/>
<sequence length="347" mass="39664">MPLLSCSQTFRLPPLHETFSVFPDNGLNPNYNACRAQSRAWISKYNVQVCGPKMRAFMDNCNFELSNAYVYPYAQPAGLRATMDLANILWLYDEYTDMQTGEDAAKAAVTVSKTLLNPEYDDDTWICHMMRDFYVNHIQKCRPNVAHRFIENFCRYTEVVGTEAKLREKNEVLDIPGYVALRREISAVRTCFDLVEYCLDLDFPDYVHKDPIFVIGYNAAMDLVFWANDLFSYNSEQAKGHAAANVVTVIMTSKKMNLQSTVDFIAGFCEALTFQLLDAKRALSLHEDPTFSRDAVRCLEAFGDWVRGNDAWSFATTRYFGPENKIVKETRIVKLKAPVEESVALKE</sequence>
<reference key="1">
    <citation type="submission" date="2014-06" db="EMBL/GenBank/DDBJ databases">
        <title>Evolutionary Origins and Diversification of the Mycorrhizal Mutualists.</title>
        <authorList>
            <consortium name="DOE Joint Genome Institute"/>
            <consortium name="Mycorrhizal Genomics Consortium"/>
            <person name="Kohler A."/>
            <person name="Kuo A."/>
            <person name="Nagy L.G."/>
            <person name="Floudas D."/>
            <person name="Copeland A."/>
            <person name="Barry K.W."/>
            <person name="Cichocki N."/>
            <person name="Veneault-Fourrey C."/>
            <person name="LaButti K."/>
            <person name="Lindquist E.A."/>
            <person name="Lipzen A."/>
            <person name="Lundell T."/>
            <person name="Morin E."/>
            <person name="Murat C."/>
            <person name="Riley R."/>
            <person name="Ohm R."/>
            <person name="Sun H."/>
            <person name="Tunlid A."/>
            <person name="Henrissat B."/>
            <person name="Grigoriev I.V."/>
            <person name="Hibbett D.S."/>
            <person name="Martin F."/>
        </authorList>
    </citation>
    <scope>NUCLEOTIDE SEQUENCE [LARGE SCALE GENOMIC DNA]</scope>
    <source>
        <strain>SS14</strain>
    </source>
</reference>
<reference key="2">
    <citation type="journal article" date="2020" name="ACS Chem. Biol.">
        <title>Agrocybe aegerita serves as a gateway for identifying sesquiterpene biosynthetic enzymes in higher fungi.</title>
        <authorList>
            <person name="Zhang C."/>
            <person name="Chen X."/>
            <person name="Orban A."/>
            <person name="Shukal S."/>
            <person name="Birk F."/>
            <person name="Too H.P."/>
            <person name="Ruehl M."/>
        </authorList>
    </citation>
    <scope>FUNCTION</scope>
    <scope>DOMAIN</scope>
    <scope>CATALYTIC ACTIVITY</scope>
</reference>
<accession>A0A0C9VD04</accession>
<organism>
    <name type="scientific">Sphaerobolus stellatus (strain SS14)</name>
    <dbReference type="NCBI Taxonomy" id="990650"/>
    <lineage>
        <taxon>Eukaryota</taxon>
        <taxon>Fungi</taxon>
        <taxon>Dikarya</taxon>
        <taxon>Basidiomycota</taxon>
        <taxon>Agaricomycotina</taxon>
        <taxon>Agaricomycetes</taxon>
        <taxon>Phallomycetidae</taxon>
        <taxon>Geastrales</taxon>
        <taxon>Sphaerobolaceae</taxon>
        <taxon>Sphaerobolus</taxon>
    </lineage>
</organism>
<protein>
    <recommendedName>
        <fullName evidence="4">Sesquiterpene synthase M422DRAFT_47084</fullName>
        <ecNumber evidence="3">4.2.3.-</ecNumber>
        <ecNumber evidence="3">4.2.3.88</ecNumber>
    </recommendedName>
    <alternativeName>
        <fullName evidence="4">Terpene cyclase M422DRAFT_47084</fullName>
    </alternativeName>
</protein>
<evidence type="ECO:0000250" key="1">
    <source>
        <dbReference type="UniProtKB" id="P0DL13"/>
    </source>
</evidence>
<evidence type="ECO:0000250" key="2">
    <source>
        <dbReference type="UniProtKB" id="Q9UR08"/>
    </source>
</evidence>
<evidence type="ECO:0000269" key="3">
    <source>
    </source>
</evidence>
<evidence type="ECO:0000303" key="4">
    <source>
    </source>
</evidence>
<name>TERS_SPHS4</name>
<comment type="function">
    <text evidence="3">Terpene cyclase that catalyzes the cyclization of farnesyl diphosphate (FPP) to viridiflorene and viridiflorol.</text>
</comment>
<comment type="catalytic activity">
    <reaction evidence="3">
        <text>(2E,6E)-farnesyl diphosphate = viridiflorene + diphosphate</text>
        <dbReference type="Rhea" id="RHEA:31811"/>
        <dbReference type="ChEBI" id="CHEBI:33019"/>
        <dbReference type="ChEBI" id="CHEBI:63444"/>
        <dbReference type="ChEBI" id="CHEBI:175763"/>
        <dbReference type="EC" id="4.2.3.88"/>
    </reaction>
    <physiologicalReaction direction="left-to-right" evidence="3">
        <dbReference type="Rhea" id="RHEA:31812"/>
    </physiologicalReaction>
</comment>
<comment type="cofactor">
    <cofactor evidence="3">
        <name>Mg(2+)</name>
        <dbReference type="ChEBI" id="CHEBI:18420"/>
    </cofactor>
</comment>
<comment type="domain">
    <text evidence="3">The DDXXD motif is important for the catalytic activity, presumably through binding to Mg(2+).</text>
</comment>
<comment type="similarity">
    <text evidence="3">Belongs to the terpene synthase family.</text>
</comment>